<comment type="function">
    <text evidence="2">Catalyzes the stereospecific oxidation of squalene to (S)-2,3-epoxysqualene, and is considered to be a rate-limiting enzyme in steroid biosynthesis.</text>
</comment>
<comment type="catalytic activity">
    <reaction evidence="2">
        <text>squalene + reduced [NADPH--hemoprotein reductase] + O2 = (S)-2,3-epoxysqualene + oxidized [NADPH--hemoprotein reductase] + H2O + H(+)</text>
        <dbReference type="Rhea" id="RHEA:25282"/>
        <dbReference type="Rhea" id="RHEA-COMP:11964"/>
        <dbReference type="Rhea" id="RHEA-COMP:11965"/>
        <dbReference type="ChEBI" id="CHEBI:15377"/>
        <dbReference type="ChEBI" id="CHEBI:15378"/>
        <dbReference type="ChEBI" id="CHEBI:15379"/>
        <dbReference type="ChEBI" id="CHEBI:15440"/>
        <dbReference type="ChEBI" id="CHEBI:15441"/>
        <dbReference type="ChEBI" id="CHEBI:57618"/>
        <dbReference type="ChEBI" id="CHEBI:58210"/>
        <dbReference type="EC" id="1.14.14.17"/>
    </reaction>
</comment>
<comment type="cofactor">
    <cofactor evidence="1">
        <name>FAD</name>
        <dbReference type="ChEBI" id="CHEBI:57692"/>
    </cofactor>
</comment>
<comment type="pathway">
    <text>Terpene metabolism; lanosterol biosynthesis; lanosterol from farnesyl diphosphate: step 2/3.</text>
</comment>
<comment type="subcellular location">
    <subcellularLocation>
        <location evidence="4">Membrane</location>
        <topology evidence="4">Multi-pass membrane protein</topology>
    </subcellularLocation>
</comment>
<comment type="similarity">
    <text evidence="4">Belongs to the squalene monooxygenase family.</text>
</comment>
<name>ERG12_BRANA</name>
<dbReference type="EC" id="1.14.14.17" evidence="2"/>
<dbReference type="EMBL" id="AJ005928">
    <property type="protein sequence ID" value="CAA06770.1"/>
    <property type="molecule type" value="mRNA"/>
</dbReference>
<dbReference type="PIR" id="T07940">
    <property type="entry name" value="T07940"/>
</dbReference>
<dbReference type="SMR" id="O65726"/>
<dbReference type="KEGG" id="bna:106415877"/>
<dbReference type="OrthoDB" id="1085504at2759"/>
<dbReference type="UniPathway" id="UPA00767">
    <property type="reaction ID" value="UER00752"/>
</dbReference>
<dbReference type="GO" id="GO:0016020">
    <property type="term" value="C:membrane"/>
    <property type="evidence" value="ECO:0007669"/>
    <property type="project" value="UniProtKB-SubCell"/>
</dbReference>
<dbReference type="GO" id="GO:0050660">
    <property type="term" value="F:flavin adenine dinucleotide binding"/>
    <property type="evidence" value="ECO:0007669"/>
    <property type="project" value="InterPro"/>
</dbReference>
<dbReference type="GO" id="GO:0004506">
    <property type="term" value="F:squalene monooxygenase activity"/>
    <property type="evidence" value="ECO:0007669"/>
    <property type="project" value="UniProtKB-EC"/>
</dbReference>
<dbReference type="GO" id="GO:0016126">
    <property type="term" value="P:sterol biosynthetic process"/>
    <property type="evidence" value="ECO:0007669"/>
    <property type="project" value="InterPro"/>
</dbReference>
<dbReference type="FunFam" id="3.50.50.60:FF:000074">
    <property type="entry name" value="Squalene monooxygenase 2"/>
    <property type="match status" value="1"/>
</dbReference>
<dbReference type="Gene3D" id="3.50.50.60">
    <property type="entry name" value="FAD/NAD(P)-binding domain"/>
    <property type="match status" value="1"/>
</dbReference>
<dbReference type="InterPro" id="IPR006076">
    <property type="entry name" value="FAD-dep_OxRdtase"/>
</dbReference>
<dbReference type="InterPro" id="IPR036188">
    <property type="entry name" value="FAD/NAD-bd_sf"/>
</dbReference>
<dbReference type="InterPro" id="IPR013698">
    <property type="entry name" value="Squalene_epoxidase"/>
</dbReference>
<dbReference type="InterPro" id="IPR040125">
    <property type="entry name" value="Squalene_monox"/>
</dbReference>
<dbReference type="PANTHER" id="PTHR10835:SF22">
    <property type="entry name" value="SQUALENE EPOXIDASE 5-RELATED"/>
    <property type="match status" value="1"/>
</dbReference>
<dbReference type="PANTHER" id="PTHR10835">
    <property type="entry name" value="SQUALENE MONOOXYGENASE"/>
    <property type="match status" value="1"/>
</dbReference>
<dbReference type="Pfam" id="PF01266">
    <property type="entry name" value="DAO"/>
    <property type="match status" value="1"/>
</dbReference>
<dbReference type="Pfam" id="PF08491">
    <property type="entry name" value="SE"/>
    <property type="match status" value="1"/>
</dbReference>
<dbReference type="PRINTS" id="PR00420">
    <property type="entry name" value="RNGMNOXGNASE"/>
</dbReference>
<dbReference type="SUPFAM" id="SSF51905">
    <property type="entry name" value="FAD/NAD(P)-binding domain"/>
    <property type="match status" value="1"/>
</dbReference>
<keyword id="KW-0274">FAD</keyword>
<keyword id="KW-0285">Flavoprotein</keyword>
<keyword id="KW-0472">Membrane</keyword>
<keyword id="KW-0560">Oxidoreductase</keyword>
<keyword id="KW-0812">Transmembrane</keyword>
<keyword id="KW-1133">Transmembrane helix</keyword>
<gene>
    <name type="primary">SQP1,2</name>
</gene>
<reference key="1">
    <citation type="journal article" date="1999" name="Plant Mol. Biol.">
        <title>An example of intron junctional sliding in the gene families encoding squalene monooxygenase homologues in Arabidopsis thaliana and Brassica napus.</title>
        <authorList>
            <person name="Schafer U.A."/>
            <person name="Reed D.W."/>
            <person name="Hunter D.G."/>
            <person name="Yao K."/>
            <person name="Weninger A.M."/>
            <person name="Tsang E.W.T."/>
            <person name="Reaney M.J.T."/>
            <person name="MacKenzie S.L."/>
            <person name="Covello P.S."/>
        </authorList>
    </citation>
    <scope>NUCLEOTIDE SEQUENCE [MRNA]</scope>
    <source>
        <strain>cv. Westar</strain>
        <tissue>Shoot</tissue>
    </source>
</reference>
<proteinExistence type="evidence at transcript level"/>
<organism>
    <name type="scientific">Brassica napus</name>
    <name type="common">Rape</name>
    <dbReference type="NCBI Taxonomy" id="3708"/>
    <lineage>
        <taxon>Eukaryota</taxon>
        <taxon>Viridiplantae</taxon>
        <taxon>Streptophyta</taxon>
        <taxon>Embryophyta</taxon>
        <taxon>Tracheophyta</taxon>
        <taxon>Spermatophyta</taxon>
        <taxon>Magnoliopsida</taxon>
        <taxon>eudicotyledons</taxon>
        <taxon>Gunneridae</taxon>
        <taxon>Pentapetalae</taxon>
        <taxon>rosids</taxon>
        <taxon>malvids</taxon>
        <taxon>Brassicales</taxon>
        <taxon>Brassicaceae</taxon>
        <taxon>Brassiceae</taxon>
        <taxon>Brassica</taxon>
    </lineage>
</organism>
<accession>O65726</accession>
<evidence type="ECO:0000250" key="1">
    <source>
        <dbReference type="UniProtKB" id="Q14534"/>
    </source>
</evidence>
<evidence type="ECO:0000250" key="2">
    <source>
        <dbReference type="UniProtKB" id="Q9SM02"/>
    </source>
</evidence>
<evidence type="ECO:0000255" key="3"/>
<evidence type="ECO:0000305" key="4"/>
<protein>
    <recommendedName>
        <fullName>Squalene monooxygenase 1,2</fullName>
        <ecNumber evidence="2">1.14.14.17</ecNumber>
    </recommendedName>
    <alternativeName>
        <fullName>Squalene epoxidase 1,2</fullName>
        <shortName>SE 1,2</shortName>
    </alternativeName>
</protein>
<sequence>MDMAFVEVCLRMLLVFVLSWTIFHVNNRKKKKATKLADLATEERKEGGPDVIIVGAGVGGSALAYALAKDGRRVHVIERDMREPVRMMGEFMQPGGRLMLSKLGLQDCLEEIDAQKSTGIRLFKDGKETVACFPVDTNFPYEPSGRFFHNGRFVQRLRQKASSLPNVRLEEGTVRSLIEEKGVVKGVTYKNSSGEETTSFAPLTVVCDGCHSNLRRSLNDNNAEVTAYEIGYISRNCRLEQPDKLHLIMAKPSFAMLYQVSSTDVRCNFELLSKNLPSVSNGEMTSFVRNSIAPQVPLKLRKTFLKGLDEGSHIKITQAKRIPATLSRKKGVIVLGDAFNMRHPVIASGMMVLLSDILILSRLLKPLGNLGDENKVSEVMKSFYALRKPMSATVNTLGNSFWQVLIASTDEAKEAMRQGCFDYLSSGGFRTSGLMALIGGMNPRPLSLFYHLFVISLSSIGQLLSPFPTPLRVWHSLRLLDLSLKMLVPHLKAEGIGQMLSPTNAAAYRKSYMAATVV</sequence>
<feature type="chain" id="PRO_0000209845" description="Squalene monooxygenase 1,2">
    <location>
        <begin position="1"/>
        <end position="518"/>
    </location>
</feature>
<feature type="transmembrane region" description="Helical" evidence="3">
    <location>
        <begin position="3"/>
        <end position="23"/>
    </location>
</feature>
<feature type="transmembrane region" description="Helical" evidence="3">
    <location>
        <begin position="48"/>
        <end position="68"/>
    </location>
</feature>
<feature type="transmembrane region" description="Helical" evidence="3">
    <location>
        <begin position="448"/>
        <end position="468"/>
    </location>
</feature>
<feature type="binding site" evidence="1">
    <location>
        <begin position="58"/>
        <end position="59"/>
    </location>
    <ligand>
        <name>FAD</name>
        <dbReference type="ChEBI" id="CHEBI:57692"/>
    </ligand>
</feature>
<feature type="binding site" evidence="1">
    <location>
        <begin position="78"/>
        <end position="79"/>
    </location>
    <ligand>
        <name>FAD</name>
        <dbReference type="ChEBI" id="CHEBI:57692"/>
    </ligand>
</feature>
<feature type="binding site" evidence="1">
    <location>
        <position position="86"/>
    </location>
    <ligand>
        <name>FAD</name>
        <dbReference type="ChEBI" id="CHEBI:57692"/>
    </ligand>
</feature>
<feature type="binding site" evidence="1">
    <location>
        <position position="91"/>
    </location>
    <ligand>
        <name>FAD</name>
        <dbReference type="ChEBI" id="CHEBI:57692"/>
    </ligand>
</feature>
<feature type="binding site" evidence="1">
    <location>
        <position position="158"/>
    </location>
    <ligand>
        <name>FAD</name>
        <dbReference type="ChEBI" id="CHEBI:57692"/>
    </ligand>
</feature>
<feature type="binding site" evidence="1">
    <location>
        <position position="174"/>
    </location>
    <ligand>
        <name>FAD</name>
        <dbReference type="ChEBI" id="CHEBI:57692"/>
    </ligand>
</feature>
<feature type="binding site" evidence="1">
    <location>
        <position position="337"/>
    </location>
    <ligand>
        <name>FAD</name>
        <dbReference type="ChEBI" id="CHEBI:57692"/>
    </ligand>
</feature>
<feature type="binding site" evidence="1">
    <location>
        <position position="350"/>
    </location>
    <ligand>
        <name>FAD</name>
        <dbReference type="ChEBI" id="CHEBI:57692"/>
    </ligand>
</feature>